<comment type="function">
    <text evidence="1">May regulate a number of protein-protein interactions by competing for PDZ domain binding sites.</text>
</comment>
<comment type="interaction">
    <interactant intactId="EBI-317302">
        <id>Q09506</id>
    </interactant>
    <interactant intactId="EBI-317327">
        <id>G5EF99</id>
        <label>CELE_ZK1128.7</label>
    </interactant>
    <organismsDiffer>false</organismsDiffer>
    <experiments>3</experiments>
</comment>
<sequence length="124" mass="13476">MTAYGHMPGEAIECLSIAVELHKQEVIDAHGQVTIRVGFKIGGGIDQDPTKAPFKYPDSGVYITNVESGSPADVAGLRKHDKILQVNGADFTMMTHDRAVKFIKQSKVLHMLVARADLPPVSLH</sequence>
<protein>
    <recommendedName>
        <fullName evidence="3">Tax1-binding protein 3 homolog</fullName>
    </recommendedName>
</protein>
<name>TX1B3_CAEEL</name>
<dbReference type="EMBL" id="BX284603">
    <property type="protein sequence ID" value="CCD67396.1"/>
    <property type="molecule type" value="Genomic_DNA"/>
</dbReference>
<dbReference type="PIR" id="B88448">
    <property type="entry name" value="B88448"/>
</dbReference>
<dbReference type="RefSeq" id="NP_498071.1">
    <property type="nucleotide sequence ID" value="NM_065670.6"/>
</dbReference>
<dbReference type="SMR" id="Q09506"/>
<dbReference type="BioGRID" id="40918">
    <property type="interactions" value="20"/>
</dbReference>
<dbReference type="DIP" id="DIP-25189N"/>
<dbReference type="FunCoup" id="Q09506">
    <property type="interactions" value="1446"/>
</dbReference>
<dbReference type="IntAct" id="Q09506">
    <property type="interactions" value="20"/>
</dbReference>
<dbReference type="STRING" id="6239.C45G9.7.1"/>
<dbReference type="PaxDb" id="6239-C45G9.7"/>
<dbReference type="PeptideAtlas" id="Q09506"/>
<dbReference type="EnsemblMetazoa" id="C45G9.7.1">
    <property type="protein sequence ID" value="C45G9.7.1"/>
    <property type="gene ID" value="WBGene00016678"/>
</dbReference>
<dbReference type="EnsemblMetazoa" id="C45G9.7.2">
    <property type="protein sequence ID" value="C45G9.7.2"/>
    <property type="gene ID" value="WBGene00016678"/>
</dbReference>
<dbReference type="GeneID" id="175685"/>
<dbReference type="KEGG" id="cel:CELE_C45G9.7"/>
<dbReference type="UCSC" id="C45G9.7">
    <property type="organism name" value="c. elegans"/>
</dbReference>
<dbReference type="AGR" id="WB:WBGene00016678"/>
<dbReference type="CTD" id="175685"/>
<dbReference type="WormBase" id="C45G9.7">
    <property type="protein sequence ID" value="CE01858"/>
    <property type="gene ID" value="WBGene00016678"/>
    <property type="gene designation" value="txbp-3"/>
</dbReference>
<dbReference type="eggNOG" id="KOG3553">
    <property type="taxonomic scope" value="Eukaryota"/>
</dbReference>
<dbReference type="GeneTree" id="ENSGT00390000002877"/>
<dbReference type="HOGENOM" id="CLU_130477_1_0_1"/>
<dbReference type="InParanoid" id="Q09506"/>
<dbReference type="OMA" id="NDFTMVT"/>
<dbReference type="OrthoDB" id="10033291at2759"/>
<dbReference type="PhylomeDB" id="Q09506"/>
<dbReference type="Reactome" id="R-CEL-5666185">
    <property type="pathway name" value="RHO GTPases Activate Rhotekin and Rhophilins"/>
</dbReference>
<dbReference type="SignaLink" id="Q09506"/>
<dbReference type="PRO" id="PR:Q09506"/>
<dbReference type="Proteomes" id="UP000001940">
    <property type="component" value="Chromosome III"/>
</dbReference>
<dbReference type="Bgee" id="WBGene00016678">
    <property type="expression patterns" value="Expressed in embryo and 4 other cell types or tissues"/>
</dbReference>
<dbReference type="CDD" id="cd10822">
    <property type="entry name" value="PDZ_TAX1BP3-like"/>
    <property type="match status" value="1"/>
</dbReference>
<dbReference type="Gene3D" id="2.30.42.10">
    <property type="match status" value="1"/>
</dbReference>
<dbReference type="InterPro" id="IPR001478">
    <property type="entry name" value="PDZ"/>
</dbReference>
<dbReference type="InterPro" id="IPR036034">
    <property type="entry name" value="PDZ_sf"/>
</dbReference>
<dbReference type="InterPro" id="IPR050614">
    <property type="entry name" value="Synaptic_Scaffolding_LAP-MAGUK"/>
</dbReference>
<dbReference type="InterPro" id="IPR017268">
    <property type="entry name" value="Tax1-binding_p3"/>
</dbReference>
<dbReference type="PANTHER" id="PTHR23119">
    <property type="entry name" value="DISCS LARGE"/>
    <property type="match status" value="1"/>
</dbReference>
<dbReference type="PANTHER" id="PTHR23119:SF50">
    <property type="entry name" value="PDZ DOMAIN-CONTAINING PROTEIN"/>
    <property type="match status" value="1"/>
</dbReference>
<dbReference type="Pfam" id="PF00595">
    <property type="entry name" value="PDZ"/>
    <property type="match status" value="1"/>
</dbReference>
<dbReference type="PIRSF" id="PIRSF037712">
    <property type="entry name" value="Tax1-binding_p3"/>
    <property type="match status" value="1"/>
</dbReference>
<dbReference type="SMART" id="SM00228">
    <property type="entry name" value="PDZ"/>
    <property type="match status" value="1"/>
</dbReference>
<dbReference type="SUPFAM" id="SSF50156">
    <property type="entry name" value="PDZ domain-like"/>
    <property type="match status" value="1"/>
</dbReference>
<dbReference type="PROSITE" id="PS50106">
    <property type="entry name" value="PDZ"/>
    <property type="match status" value="1"/>
</dbReference>
<evidence type="ECO:0000250" key="1">
    <source>
        <dbReference type="UniProtKB" id="O14907"/>
    </source>
</evidence>
<evidence type="ECO:0000255" key="2">
    <source>
        <dbReference type="PROSITE-ProRule" id="PRU00143"/>
    </source>
</evidence>
<evidence type="ECO:0000312" key="3">
    <source>
        <dbReference type="WormBase" id="C45G9.7"/>
    </source>
</evidence>
<organism>
    <name type="scientific">Caenorhabditis elegans</name>
    <dbReference type="NCBI Taxonomy" id="6239"/>
    <lineage>
        <taxon>Eukaryota</taxon>
        <taxon>Metazoa</taxon>
        <taxon>Ecdysozoa</taxon>
        <taxon>Nematoda</taxon>
        <taxon>Chromadorea</taxon>
        <taxon>Rhabditida</taxon>
        <taxon>Rhabditina</taxon>
        <taxon>Rhabditomorpha</taxon>
        <taxon>Rhabditoidea</taxon>
        <taxon>Rhabditidae</taxon>
        <taxon>Peloderinae</taxon>
        <taxon>Caenorhabditis</taxon>
    </lineage>
</organism>
<gene>
    <name evidence="3" type="primary">txbp-3</name>
    <name evidence="3" type="ORF">C45G9.7</name>
</gene>
<accession>Q09506</accession>
<feature type="chain" id="PRO_0000065239" description="Tax1-binding protein 3 homolog">
    <location>
        <begin position="1"/>
        <end position="124"/>
    </location>
</feature>
<feature type="domain" description="PDZ" evidence="2">
    <location>
        <begin position="18"/>
        <end position="106"/>
    </location>
</feature>
<keyword id="KW-1185">Reference proteome</keyword>
<reference key="1">
    <citation type="journal article" date="1998" name="Science">
        <title>Genome sequence of the nematode C. elegans: a platform for investigating biology.</title>
        <authorList>
            <consortium name="The C. elegans sequencing consortium"/>
        </authorList>
    </citation>
    <scope>NUCLEOTIDE SEQUENCE [LARGE SCALE GENOMIC DNA]</scope>
    <source>
        <strain>Bristol N2</strain>
    </source>
</reference>
<proteinExistence type="evidence at protein level"/>